<gene>
    <name type="primary">MDV020</name>
</gene>
<organismHost>
    <name type="scientific">Gallus gallus</name>
    <name type="common">Chicken</name>
    <dbReference type="NCBI Taxonomy" id="9031"/>
</organismHost>
<reference key="1">
    <citation type="journal article" date="2000" name="J. Virol.">
        <title>The genome of a very virulent Marek's disease virus.</title>
        <authorList>
            <person name="Tulman E.R."/>
            <person name="Afonso C.L."/>
            <person name="Lu Z."/>
            <person name="Zsak L."/>
            <person name="Rock D.L."/>
            <person name="Kutish G.F."/>
        </authorList>
    </citation>
    <scope>NUCLEOTIDE SEQUENCE [LARGE SCALE GENOMIC DNA]</scope>
</reference>
<comment type="function">
    <text evidence="1">Component of the helicase/primase complex. Unwinds the DNA at the replication forks and generates single-stranded DNA for both leading and lagging strand synthesis. The primase synthesizes short RNA primers on the lagging strand that the polymerase presumably elongates using dNTPs. The primase-associated factor has no known catalytic activity in the complex and may serve to facilitate the formation of the replisome by directly interacting with the origin-binding protein and the polymerase.</text>
</comment>
<comment type="subunit">
    <text evidence="1">Associates with the primase and the helicase to form the helicase-primase complex. Interacts with the origin-binding protein. Interacts with the polymerase catalytic subunit.</text>
</comment>
<comment type="subcellular location">
    <subcellularLocation>
        <location evidence="1">Host nucleus</location>
    </subcellularLocation>
</comment>
<comment type="similarity">
    <text evidence="1">Belongs to the herpesviridae HEPA family.</text>
</comment>
<dbReference type="EMBL" id="AF243438">
    <property type="protein sequence ID" value="AAG14200.1"/>
    <property type="molecule type" value="Genomic_DNA"/>
</dbReference>
<dbReference type="RefSeq" id="YP_001033936.1">
    <property type="nucleotide sequence ID" value="NC_002229.3"/>
</dbReference>
<dbReference type="GeneID" id="4811481"/>
<dbReference type="KEGG" id="vg:4811481"/>
<dbReference type="Proteomes" id="UP000008072">
    <property type="component" value="Segment"/>
</dbReference>
<dbReference type="GO" id="GO:0042025">
    <property type="term" value="C:host cell nucleus"/>
    <property type="evidence" value="ECO:0007669"/>
    <property type="project" value="UniProtKB-SubCell"/>
</dbReference>
<dbReference type="GO" id="GO:0006260">
    <property type="term" value="P:DNA replication"/>
    <property type="evidence" value="ECO:0007669"/>
    <property type="project" value="UniProtKB-KW"/>
</dbReference>
<dbReference type="GO" id="GO:0019079">
    <property type="term" value="P:viral genome replication"/>
    <property type="evidence" value="ECO:0007669"/>
    <property type="project" value="InterPro"/>
</dbReference>
<dbReference type="HAMAP" id="MF_04010">
    <property type="entry name" value="HSV_HEPA"/>
    <property type="match status" value="1"/>
</dbReference>
<dbReference type="InterPro" id="IPR004996">
    <property type="entry name" value="HSV_HEPA"/>
</dbReference>
<dbReference type="Pfam" id="PF03324">
    <property type="entry name" value="Herpes_HEPA"/>
    <property type="match status" value="1"/>
</dbReference>
<proteinExistence type="inferred from homology"/>
<keyword id="KW-0235">DNA replication</keyword>
<keyword id="KW-1048">Host nucleus</keyword>
<keyword id="KW-1185">Reference proteome</keyword>
<organism>
    <name type="scientific">Gallid herpesvirus 2 (strain Chicken/Md5/ATCC VR-987)</name>
    <name type="common">GaHV-2</name>
    <name type="synonym">Marek's disease herpesvirus type 1</name>
    <dbReference type="NCBI Taxonomy" id="10389"/>
    <lineage>
        <taxon>Viruses</taxon>
        <taxon>Duplodnaviria</taxon>
        <taxon>Heunggongvirae</taxon>
        <taxon>Peploviricota</taxon>
        <taxon>Herviviricetes</taxon>
        <taxon>Herpesvirales</taxon>
        <taxon>Orthoherpesviridae</taxon>
        <taxon>Alphaherpesvirinae</taxon>
        <taxon>Mardivirus</taxon>
        <taxon>Mardivirus gallidalpha2</taxon>
        <taxon>Gallid alphaherpesvirus 2</taxon>
    </lineage>
</organism>
<accession>Q9E6Q8</accession>
<feature type="chain" id="PRO_0000406581" description="DNA helicase/primase complex-associated protein">
    <location>
        <begin position="1"/>
        <end position="769"/>
    </location>
</feature>
<evidence type="ECO:0000255" key="1">
    <source>
        <dbReference type="HAMAP-Rule" id="MF_04010"/>
    </source>
</evidence>
<protein>
    <recommendedName>
        <fullName evidence="1">DNA helicase/primase complex-associated protein</fullName>
        <shortName evidence="1">HEPA</shortName>
    </recommendedName>
    <alternativeName>
        <fullName evidence="1">Primase-associated factor</fullName>
    </alternativeName>
</protein>
<sequence>MRQTISTMAASSKTNMMQIMRGCICYTTVYRIWTNKNRTEGLTALCYLLFRNTCGQYSAQYSTVNLSGKSMAKLWGLNPDMITDTMLAGMTNSASVTGLWPSCPSDQHMLWKALLTTTLAKLRHRLGYHAYYTPVTIYIDSQTGLVTACEPVSGERSIPRPGLLKTDGMISVEESCLISTAMKHAEGAPLAHIKLSALKRTRQIPEFDMRIEIQTKEERFLREYKKVNSPYKKFKCDNNSNTIFKVVDNTLVLDHLQPPVRALSLVPTSFDCLVTTPAEFSLVALLATYAKWHEKLYSCDNESTNILVPILMYIGPETNPRGEDVDYSCIIGFPGWPIVKSSTANQTAIKDAIDAYVDTDGLWPLAGPRTFHLLAPWSPENHPFPMIDTSHILSVHSTDIRHKAADEWTTGRITCILRDPTLIENAAIAKFDFSAFFATLYLGLFPTHSRLHDVVKARLKREKPWLKRPILEFGGLLKKLNEDVYQSIISIGNHISIEVEATASSLMFAPCTYIKDGMWGTFMDKSKNVPRPPMDDERDFNILRNACAESANNFAATIGLQFPDEILLDLRLEGIYTHAMSWNANCYWLWNKSNHHKDFVGFPNQPRFASYAKHGLSTLLEKICISNDTDESLQTVREKTHEVFEELLSIAFDHRSDVSFWSCPTELYDDTQYIAALGMKAAARFDTSGFNRETVQTVTADGKIVSVTCSLFEGEIILPAIDCIDYMKPILAAFSRLLINVLSSKWDNVNRDDFTFDIESYRFMFINNK</sequence>
<name>HEPA_GAHVM</name>